<dbReference type="EMBL" id="CP000112">
    <property type="protein sequence ID" value="ABB39047.1"/>
    <property type="molecule type" value="Genomic_DNA"/>
</dbReference>
<dbReference type="RefSeq" id="WP_011368138.1">
    <property type="nucleotide sequence ID" value="NC_007519.1"/>
</dbReference>
<dbReference type="SMR" id="Q30Z49"/>
<dbReference type="STRING" id="207559.Dde_2250"/>
<dbReference type="KEGG" id="dde:Dde_2250"/>
<dbReference type="eggNOG" id="COG0197">
    <property type="taxonomic scope" value="Bacteria"/>
</dbReference>
<dbReference type="HOGENOM" id="CLU_078858_2_1_7"/>
<dbReference type="Proteomes" id="UP000002710">
    <property type="component" value="Chromosome"/>
</dbReference>
<dbReference type="GO" id="GO:0022625">
    <property type="term" value="C:cytosolic large ribosomal subunit"/>
    <property type="evidence" value="ECO:0007669"/>
    <property type="project" value="TreeGrafter"/>
</dbReference>
<dbReference type="GO" id="GO:0019843">
    <property type="term" value="F:rRNA binding"/>
    <property type="evidence" value="ECO:0007669"/>
    <property type="project" value="UniProtKB-UniRule"/>
</dbReference>
<dbReference type="GO" id="GO:0003735">
    <property type="term" value="F:structural constituent of ribosome"/>
    <property type="evidence" value="ECO:0007669"/>
    <property type="project" value="InterPro"/>
</dbReference>
<dbReference type="GO" id="GO:0000049">
    <property type="term" value="F:tRNA binding"/>
    <property type="evidence" value="ECO:0007669"/>
    <property type="project" value="UniProtKB-KW"/>
</dbReference>
<dbReference type="GO" id="GO:0006412">
    <property type="term" value="P:translation"/>
    <property type="evidence" value="ECO:0007669"/>
    <property type="project" value="UniProtKB-UniRule"/>
</dbReference>
<dbReference type="CDD" id="cd01433">
    <property type="entry name" value="Ribosomal_L16_L10e"/>
    <property type="match status" value="1"/>
</dbReference>
<dbReference type="FunFam" id="3.90.1170.10:FF:000001">
    <property type="entry name" value="50S ribosomal protein L16"/>
    <property type="match status" value="1"/>
</dbReference>
<dbReference type="Gene3D" id="3.90.1170.10">
    <property type="entry name" value="Ribosomal protein L10e/L16"/>
    <property type="match status" value="1"/>
</dbReference>
<dbReference type="HAMAP" id="MF_01342">
    <property type="entry name" value="Ribosomal_uL16"/>
    <property type="match status" value="1"/>
</dbReference>
<dbReference type="InterPro" id="IPR047873">
    <property type="entry name" value="Ribosomal_uL16"/>
</dbReference>
<dbReference type="InterPro" id="IPR000114">
    <property type="entry name" value="Ribosomal_uL16_bact-type"/>
</dbReference>
<dbReference type="InterPro" id="IPR020798">
    <property type="entry name" value="Ribosomal_uL16_CS"/>
</dbReference>
<dbReference type="InterPro" id="IPR016180">
    <property type="entry name" value="Ribosomal_uL16_dom"/>
</dbReference>
<dbReference type="InterPro" id="IPR036920">
    <property type="entry name" value="Ribosomal_uL16_sf"/>
</dbReference>
<dbReference type="NCBIfam" id="TIGR01164">
    <property type="entry name" value="rplP_bact"/>
    <property type="match status" value="1"/>
</dbReference>
<dbReference type="PANTHER" id="PTHR12220">
    <property type="entry name" value="50S/60S RIBOSOMAL PROTEIN L16"/>
    <property type="match status" value="1"/>
</dbReference>
<dbReference type="PANTHER" id="PTHR12220:SF13">
    <property type="entry name" value="LARGE RIBOSOMAL SUBUNIT PROTEIN UL16M"/>
    <property type="match status" value="1"/>
</dbReference>
<dbReference type="Pfam" id="PF00252">
    <property type="entry name" value="Ribosomal_L16"/>
    <property type="match status" value="1"/>
</dbReference>
<dbReference type="PRINTS" id="PR00060">
    <property type="entry name" value="RIBOSOMALL16"/>
</dbReference>
<dbReference type="SUPFAM" id="SSF54686">
    <property type="entry name" value="Ribosomal protein L16p/L10e"/>
    <property type="match status" value="1"/>
</dbReference>
<dbReference type="PROSITE" id="PS00586">
    <property type="entry name" value="RIBOSOMAL_L16_1"/>
    <property type="match status" value="1"/>
</dbReference>
<protein>
    <recommendedName>
        <fullName evidence="1">Large ribosomal subunit protein uL16</fullName>
    </recommendedName>
    <alternativeName>
        <fullName evidence="2">50S ribosomal protein L16</fullName>
    </alternativeName>
</protein>
<feature type="chain" id="PRO_0000251631" description="Large ribosomal subunit protein uL16">
    <location>
        <begin position="1"/>
        <end position="137"/>
    </location>
</feature>
<reference key="1">
    <citation type="journal article" date="2011" name="J. Bacteriol.">
        <title>Complete genome sequence and updated annotation of Desulfovibrio alaskensis G20.</title>
        <authorList>
            <person name="Hauser L.J."/>
            <person name="Land M.L."/>
            <person name="Brown S.D."/>
            <person name="Larimer F."/>
            <person name="Keller K.L."/>
            <person name="Rapp-Giles B.J."/>
            <person name="Price M.N."/>
            <person name="Lin M."/>
            <person name="Bruce D.C."/>
            <person name="Detter J.C."/>
            <person name="Tapia R."/>
            <person name="Han C.S."/>
            <person name="Goodwin L.A."/>
            <person name="Cheng J.F."/>
            <person name="Pitluck S."/>
            <person name="Copeland A."/>
            <person name="Lucas S."/>
            <person name="Nolan M."/>
            <person name="Lapidus A.L."/>
            <person name="Palumbo A.V."/>
            <person name="Wall J.D."/>
        </authorList>
    </citation>
    <scope>NUCLEOTIDE SEQUENCE [LARGE SCALE GENOMIC DNA]</scope>
    <source>
        <strain>ATCC BAA-1058 / DSM 17464 / G20</strain>
    </source>
</reference>
<evidence type="ECO:0000255" key="1">
    <source>
        <dbReference type="HAMAP-Rule" id="MF_01342"/>
    </source>
</evidence>
<evidence type="ECO:0000305" key="2"/>
<comment type="function">
    <text evidence="1">Binds 23S rRNA and is also seen to make contacts with the A and possibly P site tRNAs.</text>
</comment>
<comment type="subunit">
    <text evidence="1">Part of the 50S ribosomal subunit.</text>
</comment>
<comment type="similarity">
    <text evidence="1">Belongs to the universal ribosomal protein uL16 family.</text>
</comment>
<gene>
    <name evidence="1" type="primary">rplP</name>
    <name type="ordered locus">Dde_2250</name>
</gene>
<organism>
    <name type="scientific">Oleidesulfovibrio alaskensis (strain ATCC BAA-1058 / DSM 17464 / G20)</name>
    <name type="common">Desulfovibrio alaskensis</name>
    <dbReference type="NCBI Taxonomy" id="207559"/>
    <lineage>
        <taxon>Bacteria</taxon>
        <taxon>Pseudomonadati</taxon>
        <taxon>Thermodesulfobacteriota</taxon>
        <taxon>Desulfovibrionia</taxon>
        <taxon>Desulfovibrionales</taxon>
        <taxon>Desulfovibrionaceae</taxon>
        <taxon>Oleidesulfovibrio</taxon>
    </lineage>
</organism>
<sequence>MLTPKKVKFRKRQKGRLKGDALKGNNVAFGEIGLKVLEHGKLTSQQIEAARVAAMRHIKRGGKMWIRIFPDQPYTAKPLETRQGKGKGAPVGWYAPVKPGRVLYEIKGVNLELAREALTRAAHKLPVKTTIVVREGL</sequence>
<name>RL16_OLEA2</name>
<keyword id="KW-1185">Reference proteome</keyword>
<keyword id="KW-0687">Ribonucleoprotein</keyword>
<keyword id="KW-0689">Ribosomal protein</keyword>
<keyword id="KW-0694">RNA-binding</keyword>
<keyword id="KW-0699">rRNA-binding</keyword>
<keyword id="KW-0820">tRNA-binding</keyword>
<proteinExistence type="inferred from homology"/>
<accession>Q30Z49</accession>